<feature type="chain" id="PRO_0000102865" description="Succinate--CoA ligase [ADP-forming] subunit beta">
    <location>
        <begin position="1"/>
        <end position="388"/>
    </location>
</feature>
<feature type="domain" description="ATP-grasp" evidence="1">
    <location>
        <begin position="9"/>
        <end position="244"/>
    </location>
</feature>
<feature type="binding site" evidence="1">
    <location>
        <position position="46"/>
    </location>
    <ligand>
        <name>ATP</name>
        <dbReference type="ChEBI" id="CHEBI:30616"/>
    </ligand>
</feature>
<feature type="binding site" evidence="1">
    <location>
        <begin position="53"/>
        <end position="55"/>
    </location>
    <ligand>
        <name>ATP</name>
        <dbReference type="ChEBI" id="CHEBI:30616"/>
    </ligand>
</feature>
<feature type="binding site" evidence="1">
    <location>
        <position position="99"/>
    </location>
    <ligand>
        <name>ATP</name>
        <dbReference type="ChEBI" id="CHEBI:30616"/>
    </ligand>
</feature>
<feature type="binding site" evidence="1">
    <location>
        <position position="102"/>
    </location>
    <ligand>
        <name>ATP</name>
        <dbReference type="ChEBI" id="CHEBI:30616"/>
    </ligand>
</feature>
<feature type="binding site" evidence="1">
    <location>
        <position position="107"/>
    </location>
    <ligand>
        <name>ATP</name>
        <dbReference type="ChEBI" id="CHEBI:30616"/>
    </ligand>
</feature>
<feature type="binding site" evidence="1">
    <location>
        <position position="199"/>
    </location>
    <ligand>
        <name>Mg(2+)</name>
        <dbReference type="ChEBI" id="CHEBI:18420"/>
    </ligand>
</feature>
<feature type="binding site" evidence="1">
    <location>
        <position position="213"/>
    </location>
    <ligand>
        <name>Mg(2+)</name>
        <dbReference type="ChEBI" id="CHEBI:18420"/>
    </ligand>
</feature>
<feature type="binding site" evidence="1">
    <location>
        <position position="264"/>
    </location>
    <ligand>
        <name>substrate</name>
        <note>ligand shared with subunit alpha</note>
    </ligand>
</feature>
<feature type="binding site" evidence="1">
    <location>
        <begin position="321"/>
        <end position="323"/>
    </location>
    <ligand>
        <name>substrate</name>
        <note>ligand shared with subunit alpha</note>
    </ligand>
</feature>
<keyword id="KW-0067">ATP-binding</keyword>
<keyword id="KW-0436">Ligase</keyword>
<keyword id="KW-0460">Magnesium</keyword>
<keyword id="KW-0479">Metal-binding</keyword>
<keyword id="KW-0547">Nucleotide-binding</keyword>
<keyword id="KW-0816">Tricarboxylic acid cycle</keyword>
<protein>
    <recommendedName>
        <fullName evidence="1">Succinate--CoA ligase [ADP-forming] subunit beta</fullName>
        <ecNumber evidence="1">6.2.1.5</ecNumber>
    </recommendedName>
    <alternativeName>
        <fullName evidence="1">Succinyl-CoA synthetase subunit beta</fullName>
        <shortName evidence="1">SCS-beta</shortName>
    </alternativeName>
</protein>
<accession>Q8CPH5</accession>
<gene>
    <name evidence="1" type="primary">sucC</name>
    <name type="ordered locus">SE_0923</name>
</gene>
<organism>
    <name type="scientific">Staphylococcus epidermidis (strain ATCC 12228 / FDA PCI 1200)</name>
    <dbReference type="NCBI Taxonomy" id="176280"/>
    <lineage>
        <taxon>Bacteria</taxon>
        <taxon>Bacillati</taxon>
        <taxon>Bacillota</taxon>
        <taxon>Bacilli</taxon>
        <taxon>Bacillales</taxon>
        <taxon>Staphylococcaceae</taxon>
        <taxon>Staphylococcus</taxon>
    </lineage>
</organism>
<proteinExistence type="inferred from homology"/>
<reference key="1">
    <citation type="journal article" date="2003" name="Mol. Microbiol.">
        <title>Genome-based analysis of virulence genes in a non-biofilm-forming Staphylococcus epidermidis strain (ATCC 12228).</title>
        <authorList>
            <person name="Zhang Y.-Q."/>
            <person name="Ren S.-X."/>
            <person name="Li H.-L."/>
            <person name="Wang Y.-X."/>
            <person name="Fu G."/>
            <person name="Yang J."/>
            <person name="Qin Z.-Q."/>
            <person name="Miao Y.-G."/>
            <person name="Wang W.-Y."/>
            <person name="Chen R.-S."/>
            <person name="Shen Y."/>
            <person name="Chen Z."/>
            <person name="Yuan Z.-H."/>
            <person name="Zhao G.-P."/>
            <person name="Qu D."/>
            <person name="Danchin A."/>
            <person name="Wen Y.-M."/>
        </authorList>
    </citation>
    <scope>NUCLEOTIDE SEQUENCE [LARGE SCALE GENOMIC DNA]</scope>
    <source>
        <strain>ATCC 12228 / FDA PCI 1200</strain>
    </source>
</reference>
<name>SUCC_STAES</name>
<sequence>MNIHEYQGKEIFRSMGVAVPEGRVAFTAEEAVEKAKELNSDVYVVKAQIHAGGRGKAGGVKIAKSLSEVETYANELLGKQLVTHQTGPEGKEVKRLYIEEGCDIQKEYYVGFVIDRATDKVTLMASEEGGTEIEEVAAQTPEKIFKETIDPVVGLSPYQARRIAFNINIPKESVGKATKFLLALYNVFIEKDCSIVEINPLVTTGDGQVLALDAKLNFDDNALFRHKDILELRDLEEEDPKEIEASKYDLSYIALDGDIGCMVNGAGLAMATMDTINHFGGNPANFLDVGGGATKEKVTEAFKIILGDDNVKGIFVNIFGGIMKCDVIAEGIVAAVKEVELTLPLVVRLEGTNVERGKAILNESGLAIEPAATMAEGAQKIVKLVKEA</sequence>
<evidence type="ECO:0000255" key="1">
    <source>
        <dbReference type="HAMAP-Rule" id="MF_00558"/>
    </source>
</evidence>
<comment type="function">
    <text evidence="1">Succinyl-CoA synthetase functions in the citric acid cycle (TCA), coupling the hydrolysis of succinyl-CoA to the synthesis of either ATP or GTP and thus represents the only step of substrate-level phosphorylation in the TCA. The beta subunit provides nucleotide specificity of the enzyme and binds the substrate succinate, while the binding sites for coenzyme A and phosphate are found in the alpha subunit.</text>
</comment>
<comment type="catalytic activity">
    <reaction evidence="1">
        <text>succinate + ATP + CoA = succinyl-CoA + ADP + phosphate</text>
        <dbReference type="Rhea" id="RHEA:17661"/>
        <dbReference type="ChEBI" id="CHEBI:30031"/>
        <dbReference type="ChEBI" id="CHEBI:30616"/>
        <dbReference type="ChEBI" id="CHEBI:43474"/>
        <dbReference type="ChEBI" id="CHEBI:57287"/>
        <dbReference type="ChEBI" id="CHEBI:57292"/>
        <dbReference type="ChEBI" id="CHEBI:456216"/>
        <dbReference type="EC" id="6.2.1.5"/>
    </reaction>
    <physiologicalReaction direction="right-to-left" evidence="1">
        <dbReference type="Rhea" id="RHEA:17663"/>
    </physiologicalReaction>
</comment>
<comment type="catalytic activity">
    <reaction evidence="1">
        <text>GTP + succinate + CoA = succinyl-CoA + GDP + phosphate</text>
        <dbReference type="Rhea" id="RHEA:22120"/>
        <dbReference type="ChEBI" id="CHEBI:30031"/>
        <dbReference type="ChEBI" id="CHEBI:37565"/>
        <dbReference type="ChEBI" id="CHEBI:43474"/>
        <dbReference type="ChEBI" id="CHEBI:57287"/>
        <dbReference type="ChEBI" id="CHEBI:57292"/>
        <dbReference type="ChEBI" id="CHEBI:58189"/>
    </reaction>
    <physiologicalReaction direction="right-to-left" evidence="1">
        <dbReference type="Rhea" id="RHEA:22122"/>
    </physiologicalReaction>
</comment>
<comment type="cofactor">
    <cofactor evidence="1">
        <name>Mg(2+)</name>
        <dbReference type="ChEBI" id="CHEBI:18420"/>
    </cofactor>
    <text evidence="1">Binds 1 Mg(2+) ion per subunit.</text>
</comment>
<comment type="pathway">
    <text evidence="1">Carbohydrate metabolism; tricarboxylic acid cycle; succinate from succinyl-CoA (ligase route): step 1/1.</text>
</comment>
<comment type="subunit">
    <text evidence="1">Heterotetramer of two alpha and two beta subunits.</text>
</comment>
<comment type="similarity">
    <text evidence="1">Belongs to the succinate/malate CoA ligase beta subunit family.</text>
</comment>
<dbReference type="EC" id="6.2.1.5" evidence="1"/>
<dbReference type="EMBL" id="AE015929">
    <property type="protein sequence ID" value="AAO04520.1"/>
    <property type="molecule type" value="Genomic_DNA"/>
</dbReference>
<dbReference type="RefSeq" id="NP_764478.1">
    <property type="nucleotide sequence ID" value="NC_004461.1"/>
</dbReference>
<dbReference type="RefSeq" id="WP_002439496.1">
    <property type="nucleotide sequence ID" value="NZ_WBME01000001.1"/>
</dbReference>
<dbReference type="SMR" id="Q8CPH5"/>
<dbReference type="GeneID" id="50018941"/>
<dbReference type="KEGG" id="sep:SE_0923"/>
<dbReference type="PATRIC" id="fig|176280.10.peg.897"/>
<dbReference type="eggNOG" id="COG0045">
    <property type="taxonomic scope" value="Bacteria"/>
</dbReference>
<dbReference type="HOGENOM" id="CLU_037430_0_2_9"/>
<dbReference type="OrthoDB" id="9802602at2"/>
<dbReference type="UniPathway" id="UPA00223">
    <property type="reaction ID" value="UER00999"/>
</dbReference>
<dbReference type="Proteomes" id="UP000001411">
    <property type="component" value="Chromosome"/>
</dbReference>
<dbReference type="GO" id="GO:0005829">
    <property type="term" value="C:cytosol"/>
    <property type="evidence" value="ECO:0007669"/>
    <property type="project" value="TreeGrafter"/>
</dbReference>
<dbReference type="GO" id="GO:0042709">
    <property type="term" value="C:succinate-CoA ligase complex"/>
    <property type="evidence" value="ECO:0007669"/>
    <property type="project" value="TreeGrafter"/>
</dbReference>
<dbReference type="GO" id="GO:0005524">
    <property type="term" value="F:ATP binding"/>
    <property type="evidence" value="ECO:0007669"/>
    <property type="project" value="UniProtKB-UniRule"/>
</dbReference>
<dbReference type="GO" id="GO:0000287">
    <property type="term" value="F:magnesium ion binding"/>
    <property type="evidence" value="ECO:0007669"/>
    <property type="project" value="UniProtKB-UniRule"/>
</dbReference>
<dbReference type="GO" id="GO:0004775">
    <property type="term" value="F:succinate-CoA ligase (ADP-forming) activity"/>
    <property type="evidence" value="ECO:0007669"/>
    <property type="project" value="UniProtKB-UniRule"/>
</dbReference>
<dbReference type="GO" id="GO:0004776">
    <property type="term" value="F:succinate-CoA ligase (GDP-forming) activity"/>
    <property type="evidence" value="ECO:0007669"/>
    <property type="project" value="RHEA"/>
</dbReference>
<dbReference type="GO" id="GO:0006104">
    <property type="term" value="P:succinyl-CoA metabolic process"/>
    <property type="evidence" value="ECO:0007669"/>
    <property type="project" value="TreeGrafter"/>
</dbReference>
<dbReference type="GO" id="GO:0006099">
    <property type="term" value="P:tricarboxylic acid cycle"/>
    <property type="evidence" value="ECO:0007669"/>
    <property type="project" value="UniProtKB-UniRule"/>
</dbReference>
<dbReference type="FunFam" id="3.30.1490.20:FF:000002">
    <property type="entry name" value="Succinate--CoA ligase [ADP-forming] subunit beta"/>
    <property type="match status" value="1"/>
</dbReference>
<dbReference type="FunFam" id="3.30.470.20:FF:000002">
    <property type="entry name" value="Succinate--CoA ligase [ADP-forming] subunit beta"/>
    <property type="match status" value="1"/>
</dbReference>
<dbReference type="FunFam" id="3.40.50.261:FF:000001">
    <property type="entry name" value="Succinate--CoA ligase [ADP-forming] subunit beta"/>
    <property type="match status" value="1"/>
</dbReference>
<dbReference type="Gene3D" id="3.30.1490.20">
    <property type="entry name" value="ATP-grasp fold, A domain"/>
    <property type="match status" value="1"/>
</dbReference>
<dbReference type="Gene3D" id="3.30.470.20">
    <property type="entry name" value="ATP-grasp fold, B domain"/>
    <property type="match status" value="1"/>
</dbReference>
<dbReference type="Gene3D" id="3.40.50.261">
    <property type="entry name" value="Succinyl-CoA synthetase domains"/>
    <property type="match status" value="1"/>
</dbReference>
<dbReference type="HAMAP" id="MF_00558">
    <property type="entry name" value="Succ_CoA_beta"/>
    <property type="match status" value="1"/>
</dbReference>
<dbReference type="InterPro" id="IPR011761">
    <property type="entry name" value="ATP-grasp"/>
</dbReference>
<dbReference type="InterPro" id="IPR013650">
    <property type="entry name" value="ATP-grasp_succ-CoA_synth-type"/>
</dbReference>
<dbReference type="InterPro" id="IPR013815">
    <property type="entry name" value="ATP_grasp_subdomain_1"/>
</dbReference>
<dbReference type="InterPro" id="IPR017866">
    <property type="entry name" value="Succ-CoA_synthase_bsu_CS"/>
</dbReference>
<dbReference type="InterPro" id="IPR005811">
    <property type="entry name" value="SUCC_ACL_C"/>
</dbReference>
<dbReference type="InterPro" id="IPR005809">
    <property type="entry name" value="Succ_CoA_ligase-like_bsu"/>
</dbReference>
<dbReference type="InterPro" id="IPR016102">
    <property type="entry name" value="Succinyl-CoA_synth-like"/>
</dbReference>
<dbReference type="NCBIfam" id="NF001913">
    <property type="entry name" value="PRK00696.1"/>
    <property type="match status" value="1"/>
</dbReference>
<dbReference type="NCBIfam" id="TIGR01016">
    <property type="entry name" value="sucCoAbeta"/>
    <property type="match status" value="1"/>
</dbReference>
<dbReference type="PANTHER" id="PTHR11815:SF10">
    <property type="entry name" value="SUCCINATE--COA LIGASE [GDP-FORMING] SUBUNIT BETA, MITOCHONDRIAL"/>
    <property type="match status" value="1"/>
</dbReference>
<dbReference type="PANTHER" id="PTHR11815">
    <property type="entry name" value="SUCCINYL-COA SYNTHETASE BETA CHAIN"/>
    <property type="match status" value="1"/>
</dbReference>
<dbReference type="Pfam" id="PF08442">
    <property type="entry name" value="ATP-grasp_2"/>
    <property type="match status" value="1"/>
</dbReference>
<dbReference type="Pfam" id="PF00549">
    <property type="entry name" value="Ligase_CoA"/>
    <property type="match status" value="1"/>
</dbReference>
<dbReference type="PIRSF" id="PIRSF001554">
    <property type="entry name" value="SucCS_beta"/>
    <property type="match status" value="1"/>
</dbReference>
<dbReference type="SUPFAM" id="SSF56059">
    <property type="entry name" value="Glutathione synthetase ATP-binding domain-like"/>
    <property type="match status" value="1"/>
</dbReference>
<dbReference type="SUPFAM" id="SSF52210">
    <property type="entry name" value="Succinyl-CoA synthetase domains"/>
    <property type="match status" value="1"/>
</dbReference>
<dbReference type="PROSITE" id="PS50975">
    <property type="entry name" value="ATP_GRASP"/>
    <property type="match status" value="1"/>
</dbReference>
<dbReference type="PROSITE" id="PS01217">
    <property type="entry name" value="SUCCINYL_COA_LIG_3"/>
    <property type="match status" value="1"/>
</dbReference>